<feature type="chain" id="PRO_1000081487" description="Large ribosomal subunit protein bL9">
    <location>
        <begin position="1"/>
        <end position="151"/>
    </location>
</feature>
<gene>
    <name evidence="1" type="primary">rplI</name>
    <name type="ordered locus">Mflv_0877</name>
</gene>
<organism>
    <name type="scientific">Mycolicibacterium gilvum (strain PYR-GCK)</name>
    <name type="common">Mycobacterium gilvum (strain PYR-GCK)</name>
    <dbReference type="NCBI Taxonomy" id="350054"/>
    <lineage>
        <taxon>Bacteria</taxon>
        <taxon>Bacillati</taxon>
        <taxon>Actinomycetota</taxon>
        <taxon>Actinomycetes</taxon>
        <taxon>Mycobacteriales</taxon>
        <taxon>Mycobacteriaceae</taxon>
        <taxon>Mycolicibacterium</taxon>
    </lineage>
</organism>
<keyword id="KW-0687">Ribonucleoprotein</keyword>
<keyword id="KW-0689">Ribosomal protein</keyword>
<keyword id="KW-0694">RNA-binding</keyword>
<keyword id="KW-0699">rRNA-binding</keyword>
<reference key="1">
    <citation type="submission" date="2007-04" db="EMBL/GenBank/DDBJ databases">
        <title>Complete sequence of chromosome of Mycobacterium gilvum PYR-GCK.</title>
        <authorList>
            <consortium name="US DOE Joint Genome Institute"/>
            <person name="Copeland A."/>
            <person name="Lucas S."/>
            <person name="Lapidus A."/>
            <person name="Barry K."/>
            <person name="Detter J.C."/>
            <person name="Glavina del Rio T."/>
            <person name="Hammon N."/>
            <person name="Israni S."/>
            <person name="Dalin E."/>
            <person name="Tice H."/>
            <person name="Pitluck S."/>
            <person name="Chain P."/>
            <person name="Malfatti S."/>
            <person name="Shin M."/>
            <person name="Vergez L."/>
            <person name="Schmutz J."/>
            <person name="Larimer F."/>
            <person name="Land M."/>
            <person name="Hauser L."/>
            <person name="Kyrpides N."/>
            <person name="Mikhailova N."/>
            <person name="Miller C."/>
            <person name="Richardson P."/>
        </authorList>
    </citation>
    <scope>NUCLEOTIDE SEQUENCE [LARGE SCALE GENOMIC DNA]</scope>
    <source>
        <strain>PYR-GCK</strain>
    </source>
</reference>
<protein>
    <recommendedName>
        <fullName evidence="1">Large ribosomal subunit protein bL9</fullName>
    </recommendedName>
    <alternativeName>
        <fullName evidence="2">50S ribosomal protein L9</fullName>
    </alternativeName>
</protein>
<evidence type="ECO:0000255" key="1">
    <source>
        <dbReference type="HAMAP-Rule" id="MF_00503"/>
    </source>
</evidence>
<evidence type="ECO:0000305" key="2"/>
<proteinExistence type="inferred from homology"/>
<dbReference type="EMBL" id="CP000656">
    <property type="protein sequence ID" value="ABP43361.1"/>
    <property type="molecule type" value="Genomic_DNA"/>
</dbReference>
<dbReference type="SMR" id="A4T4P0"/>
<dbReference type="STRING" id="350054.Mflv_0877"/>
<dbReference type="KEGG" id="mgi:Mflv_0877"/>
<dbReference type="eggNOG" id="COG0359">
    <property type="taxonomic scope" value="Bacteria"/>
</dbReference>
<dbReference type="HOGENOM" id="CLU_078938_5_1_11"/>
<dbReference type="OrthoDB" id="9788336at2"/>
<dbReference type="GO" id="GO:1990904">
    <property type="term" value="C:ribonucleoprotein complex"/>
    <property type="evidence" value="ECO:0007669"/>
    <property type="project" value="UniProtKB-KW"/>
</dbReference>
<dbReference type="GO" id="GO:0005840">
    <property type="term" value="C:ribosome"/>
    <property type="evidence" value="ECO:0007669"/>
    <property type="project" value="UniProtKB-KW"/>
</dbReference>
<dbReference type="GO" id="GO:0019843">
    <property type="term" value="F:rRNA binding"/>
    <property type="evidence" value="ECO:0007669"/>
    <property type="project" value="UniProtKB-UniRule"/>
</dbReference>
<dbReference type="GO" id="GO:0003735">
    <property type="term" value="F:structural constituent of ribosome"/>
    <property type="evidence" value="ECO:0007669"/>
    <property type="project" value="InterPro"/>
</dbReference>
<dbReference type="GO" id="GO:0006412">
    <property type="term" value="P:translation"/>
    <property type="evidence" value="ECO:0007669"/>
    <property type="project" value="UniProtKB-UniRule"/>
</dbReference>
<dbReference type="FunFam" id="3.40.5.10:FF:000003">
    <property type="entry name" value="50S ribosomal protein L9"/>
    <property type="match status" value="1"/>
</dbReference>
<dbReference type="Gene3D" id="3.10.430.100">
    <property type="entry name" value="Ribosomal protein L9, C-terminal domain"/>
    <property type="match status" value="1"/>
</dbReference>
<dbReference type="Gene3D" id="3.40.5.10">
    <property type="entry name" value="Ribosomal protein L9, N-terminal domain"/>
    <property type="match status" value="1"/>
</dbReference>
<dbReference type="HAMAP" id="MF_00503">
    <property type="entry name" value="Ribosomal_bL9"/>
    <property type="match status" value="1"/>
</dbReference>
<dbReference type="InterPro" id="IPR000244">
    <property type="entry name" value="Ribosomal_bL9"/>
</dbReference>
<dbReference type="InterPro" id="IPR009027">
    <property type="entry name" value="Ribosomal_bL9/RNase_H1_N"/>
</dbReference>
<dbReference type="InterPro" id="IPR020594">
    <property type="entry name" value="Ribosomal_bL9_bac/chp"/>
</dbReference>
<dbReference type="InterPro" id="IPR020069">
    <property type="entry name" value="Ribosomal_bL9_C"/>
</dbReference>
<dbReference type="InterPro" id="IPR036791">
    <property type="entry name" value="Ribosomal_bL9_C_sf"/>
</dbReference>
<dbReference type="InterPro" id="IPR020070">
    <property type="entry name" value="Ribosomal_bL9_N"/>
</dbReference>
<dbReference type="InterPro" id="IPR036935">
    <property type="entry name" value="Ribosomal_bL9_N_sf"/>
</dbReference>
<dbReference type="NCBIfam" id="TIGR00158">
    <property type="entry name" value="L9"/>
    <property type="match status" value="1"/>
</dbReference>
<dbReference type="PANTHER" id="PTHR21368">
    <property type="entry name" value="50S RIBOSOMAL PROTEIN L9"/>
    <property type="match status" value="1"/>
</dbReference>
<dbReference type="Pfam" id="PF03948">
    <property type="entry name" value="Ribosomal_L9_C"/>
    <property type="match status" value="1"/>
</dbReference>
<dbReference type="Pfam" id="PF01281">
    <property type="entry name" value="Ribosomal_L9_N"/>
    <property type="match status" value="1"/>
</dbReference>
<dbReference type="SUPFAM" id="SSF55658">
    <property type="entry name" value="L9 N-domain-like"/>
    <property type="match status" value="1"/>
</dbReference>
<dbReference type="SUPFAM" id="SSF55653">
    <property type="entry name" value="Ribosomal protein L9 C-domain"/>
    <property type="match status" value="1"/>
</dbReference>
<dbReference type="PROSITE" id="PS00651">
    <property type="entry name" value="RIBOSOMAL_L9"/>
    <property type="match status" value="1"/>
</dbReference>
<name>RL9_MYCGI</name>
<sequence length="151" mass="15919">MKLILTAEVEHLGVAGDTVEVKDGYGRNYLLPRGLAIVATRGAQRQADDIRRAQELKGVKGLEHARELKTAIEALESVELSVKTAGDSGKLFGSVTAADVVSAIKKAGGPNLEKRTVDLPKAHIKSTGTHPITVRLHPDVNAALSLNVVAG</sequence>
<accession>A4T4P0</accession>
<comment type="function">
    <text evidence="1">Binds to the 23S rRNA.</text>
</comment>
<comment type="similarity">
    <text evidence="1">Belongs to the bacterial ribosomal protein bL9 family.</text>
</comment>